<proteinExistence type="inferred from homology"/>
<dbReference type="EMBL" id="BX569691">
    <property type="protein sequence ID" value="CAE07566.1"/>
    <property type="molecule type" value="Genomic_DNA"/>
</dbReference>
<dbReference type="RefSeq" id="WP_011127916.1">
    <property type="nucleotide sequence ID" value="NC_005070.1"/>
</dbReference>
<dbReference type="SMR" id="Q7U7D4"/>
<dbReference type="STRING" id="84588.SYNW1051"/>
<dbReference type="KEGG" id="syw:SYNW1051"/>
<dbReference type="eggNOG" id="COG0792">
    <property type="taxonomic scope" value="Bacteria"/>
</dbReference>
<dbReference type="HOGENOM" id="CLU_115353_0_3_3"/>
<dbReference type="Proteomes" id="UP000001422">
    <property type="component" value="Chromosome"/>
</dbReference>
<dbReference type="GO" id="GO:0003676">
    <property type="term" value="F:nucleic acid binding"/>
    <property type="evidence" value="ECO:0007669"/>
    <property type="project" value="InterPro"/>
</dbReference>
<dbReference type="Gene3D" id="3.40.1350.10">
    <property type="match status" value="1"/>
</dbReference>
<dbReference type="HAMAP" id="MF_00048">
    <property type="entry name" value="UPF0102"/>
    <property type="match status" value="1"/>
</dbReference>
<dbReference type="InterPro" id="IPR011335">
    <property type="entry name" value="Restrct_endonuc-II-like"/>
</dbReference>
<dbReference type="InterPro" id="IPR011856">
    <property type="entry name" value="tRNA_endonuc-like_dom_sf"/>
</dbReference>
<dbReference type="InterPro" id="IPR003509">
    <property type="entry name" value="UPF0102_YraN-like"/>
</dbReference>
<dbReference type="NCBIfam" id="NF011281">
    <property type="entry name" value="PRK14689.1"/>
    <property type="match status" value="1"/>
</dbReference>
<dbReference type="PANTHER" id="PTHR34039">
    <property type="entry name" value="UPF0102 PROTEIN YRAN"/>
    <property type="match status" value="1"/>
</dbReference>
<dbReference type="PANTHER" id="PTHR34039:SF1">
    <property type="entry name" value="UPF0102 PROTEIN YRAN"/>
    <property type="match status" value="1"/>
</dbReference>
<dbReference type="Pfam" id="PF02021">
    <property type="entry name" value="UPF0102"/>
    <property type="match status" value="1"/>
</dbReference>
<dbReference type="SUPFAM" id="SSF52980">
    <property type="entry name" value="Restriction endonuclease-like"/>
    <property type="match status" value="1"/>
</dbReference>
<evidence type="ECO:0000255" key="1">
    <source>
        <dbReference type="HAMAP-Rule" id="MF_00048"/>
    </source>
</evidence>
<name>Y1051_PARMW</name>
<comment type="similarity">
    <text evidence="1">Belongs to the UPF0102 family.</text>
</comment>
<organism>
    <name type="scientific">Parasynechococcus marenigrum (strain WH8102)</name>
    <dbReference type="NCBI Taxonomy" id="84588"/>
    <lineage>
        <taxon>Bacteria</taxon>
        <taxon>Bacillati</taxon>
        <taxon>Cyanobacteriota</taxon>
        <taxon>Cyanophyceae</taxon>
        <taxon>Synechococcales</taxon>
        <taxon>Prochlorococcaceae</taxon>
        <taxon>Parasynechococcus</taxon>
        <taxon>Parasynechococcus marenigrum</taxon>
    </lineage>
</organism>
<gene>
    <name type="ordered locus">SYNW1051</name>
</gene>
<feature type="chain" id="PRO_0000336276" description="UPF0102 protein SYNW1051">
    <location>
        <begin position="1"/>
        <end position="134"/>
    </location>
</feature>
<accession>Q7U7D4</accession>
<reference key="1">
    <citation type="journal article" date="2003" name="Nature">
        <title>The genome of a motile marine Synechococcus.</title>
        <authorList>
            <person name="Palenik B."/>
            <person name="Brahamsha B."/>
            <person name="Larimer F.W."/>
            <person name="Land M.L."/>
            <person name="Hauser L."/>
            <person name="Chain P."/>
            <person name="Lamerdin J.E."/>
            <person name="Regala W."/>
            <person name="Allen E.E."/>
            <person name="McCarren J."/>
            <person name="Paulsen I.T."/>
            <person name="Dufresne A."/>
            <person name="Partensky F."/>
            <person name="Webb E.A."/>
            <person name="Waterbury J."/>
        </authorList>
    </citation>
    <scope>NUCLEOTIDE SEQUENCE [LARGE SCALE GENOMIC DNA]</scope>
    <source>
        <strain>WH8102</strain>
    </source>
</reference>
<sequence>MGSSRGESFGNFVDRIPMKMQPPGAQAETRVSSLLQRQGWQLLDRNWSCRWGELDLVLHKNEQLLVVEVKKRRSLAWGPWSVDPTKRRRLGRAISCWRAEHPIQTDWLLQVAVAVVPLPPSQGAPRWCRLDRLC</sequence>
<protein>
    <recommendedName>
        <fullName evidence="1">UPF0102 protein SYNW1051</fullName>
    </recommendedName>
</protein>